<gene>
    <name type="primary">FMN1</name>
    <name type="ordered locus">ABL109W</name>
</gene>
<reference key="1">
    <citation type="journal article" date="2004" name="Science">
        <title>The Ashbya gossypii genome as a tool for mapping the ancient Saccharomyces cerevisiae genome.</title>
        <authorList>
            <person name="Dietrich F.S."/>
            <person name="Voegeli S."/>
            <person name="Brachat S."/>
            <person name="Lerch A."/>
            <person name="Gates K."/>
            <person name="Steiner S."/>
            <person name="Mohr C."/>
            <person name="Poehlmann R."/>
            <person name="Luedi P."/>
            <person name="Choi S."/>
            <person name="Wing R.A."/>
            <person name="Flavier A."/>
            <person name="Gaffney T.D."/>
            <person name="Philippsen P."/>
        </authorList>
    </citation>
    <scope>NUCLEOTIDE SEQUENCE [LARGE SCALE GENOMIC DNA]</scope>
    <source>
        <strain>ATCC 10895 / CBS 109.51 / FGSC 9923 / NRRL Y-1056</strain>
    </source>
</reference>
<reference key="2">
    <citation type="journal article" date="2013" name="G3 (Bethesda)">
        <title>Genomes of Ashbya fungi isolated from insects reveal four mating-type loci, numerous translocations, lack of transposons, and distinct gene duplications.</title>
        <authorList>
            <person name="Dietrich F.S."/>
            <person name="Voegeli S."/>
            <person name="Kuo S."/>
            <person name="Philippsen P."/>
        </authorList>
    </citation>
    <scope>GENOME REANNOTATION</scope>
    <source>
        <strain>ATCC 10895 / CBS 109.51 / FGSC 9923 / NRRL Y-1056</strain>
    </source>
</reference>
<protein>
    <recommendedName>
        <fullName>Riboflavin kinase</fullName>
        <ecNumber>2.7.1.26</ecNumber>
    </recommendedName>
    <alternativeName>
        <fullName>Flavin mononucleotide kinase 1</fullName>
    </alternativeName>
</protein>
<comment type="function">
    <text evidence="1">Catalyzes the phosphorylation of riboflavin (vitamin B2) to form flavin mononucleotide (FMN) coenzyme.</text>
</comment>
<comment type="catalytic activity">
    <reaction>
        <text>riboflavin + ATP = FMN + ADP + H(+)</text>
        <dbReference type="Rhea" id="RHEA:14357"/>
        <dbReference type="ChEBI" id="CHEBI:15378"/>
        <dbReference type="ChEBI" id="CHEBI:30616"/>
        <dbReference type="ChEBI" id="CHEBI:57986"/>
        <dbReference type="ChEBI" id="CHEBI:58210"/>
        <dbReference type="ChEBI" id="CHEBI:456216"/>
        <dbReference type="EC" id="2.7.1.26"/>
    </reaction>
</comment>
<comment type="cofactor">
    <cofactor evidence="1">
        <name>Zn(2+)</name>
        <dbReference type="ChEBI" id="CHEBI:29105"/>
    </cofactor>
    <cofactor evidence="1">
        <name>Mg(2+)</name>
        <dbReference type="ChEBI" id="CHEBI:18420"/>
    </cofactor>
    <text evidence="1">Zinc or magnesium.</text>
</comment>
<comment type="pathway">
    <text>Cofactor biosynthesis; FMN biosynthesis; FMN from riboflavin (ATP route): step 1/1.</text>
</comment>
<comment type="similarity">
    <text evidence="3">Belongs to the flavokinase family.</text>
</comment>
<comment type="sequence caution" evidence="3">
    <conflict type="erroneous initiation">
        <sequence resource="EMBL-CDS" id="AAS50662"/>
    </conflict>
</comment>
<organism>
    <name type="scientific">Eremothecium gossypii (strain ATCC 10895 / CBS 109.51 / FGSC 9923 / NRRL Y-1056)</name>
    <name type="common">Yeast</name>
    <name type="synonym">Ashbya gossypii</name>
    <dbReference type="NCBI Taxonomy" id="284811"/>
    <lineage>
        <taxon>Eukaryota</taxon>
        <taxon>Fungi</taxon>
        <taxon>Dikarya</taxon>
        <taxon>Ascomycota</taxon>
        <taxon>Saccharomycotina</taxon>
        <taxon>Saccharomycetes</taxon>
        <taxon>Saccharomycetales</taxon>
        <taxon>Saccharomycetaceae</taxon>
        <taxon>Eremothecium</taxon>
    </lineage>
</organism>
<proteinExistence type="inferred from homology"/>
<name>RIFK_EREGS</name>
<dbReference type="EC" id="2.7.1.26"/>
<dbReference type="EMBL" id="AE016815">
    <property type="protein sequence ID" value="AAS50662.1"/>
    <property type="status" value="ALT_INIT"/>
    <property type="molecule type" value="Genomic_DNA"/>
</dbReference>
<dbReference type="RefSeq" id="NP_982838.1">
    <property type="nucleotide sequence ID" value="NM_208191.1"/>
</dbReference>
<dbReference type="SMR" id="Q75DY2"/>
<dbReference type="FunCoup" id="Q75DY2">
    <property type="interactions" value="390"/>
</dbReference>
<dbReference type="STRING" id="284811.Q75DY2"/>
<dbReference type="GeneID" id="4618918"/>
<dbReference type="KEGG" id="ago:AGOS_ABL109W"/>
<dbReference type="eggNOG" id="KOG3110">
    <property type="taxonomic scope" value="Eukaryota"/>
</dbReference>
<dbReference type="InParanoid" id="Q75DY2"/>
<dbReference type="OrthoDB" id="276388at2759"/>
<dbReference type="UniPathway" id="UPA00276">
    <property type="reaction ID" value="UER00406"/>
</dbReference>
<dbReference type="Proteomes" id="UP000000591">
    <property type="component" value="Chromosome II"/>
</dbReference>
<dbReference type="GO" id="GO:0005739">
    <property type="term" value="C:mitochondrion"/>
    <property type="evidence" value="ECO:0000318"/>
    <property type="project" value="GO_Central"/>
</dbReference>
<dbReference type="GO" id="GO:0005524">
    <property type="term" value="F:ATP binding"/>
    <property type="evidence" value="ECO:0007669"/>
    <property type="project" value="UniProtKB-KW"/>
</dbReference>
<dbReference type="GO" id="GO:0046872">
    <property type="term" value="F:metal ion binding"/>
    <property type="evidence" value="ECO:0007669"/>
    <property type="project" value="UniProtKB-KW"/>
</dbReference>
<dbReference type="GO" id="GO:0008531">
    <property type="term" value="F:riboflavin kinase activity"/>
    <property type="evidence" value="ECO:0000318"/>
    <property type="project" value="GO_Central"/>
</dbReference>
<dbReference type="GO" id="GO:0009398">
    <property type="term" value="P:FMN biosynthetic process"/>
    <property type="evidence" value="ECO:0000318"/>
    <property type="project" value="GO_Central"/>
</dbReference>
<dbReference type="GO" id="GO:0009231">
    <property type="term" value="P:riboflavin biosynthetic process"/>
    <property type="evidence" value="ECO:0007669"/>
    <property type="project" value="InterPro"/>
</dbReference>
<dbReference type="GO" id="GO:0006771">
    <property type="term" value="P:riboflavin metabolic process"/>
    <property type="evidence" value="ECO:0000318"/>
    <property type="project" value="GO_Central"/>
</dbReference>
<dbReference type="Gene3D" id="2.40.30.30">
    <property type="entry name" value="Riboflavin kinase-like"/>
    <property type="match status" value="1"/>
</dbReference>
<dbReference type="InterPro" id="IPR023468">
    <property type="entry name" value="Riboflavin_kinase"/>
</dbReference>
<dbReference type="InterPro" id="IPR015865">
    <property type="entry name" value="Riboflavin_kinase_bac/euk"/>
</dbReference>
<dbReference type="InterPro" id="IPR023465">
    <property type="entry name" value="Riboflavin_kinase_dom_sf"/>
</dbReference>
<dbReference type="PANTHER" id="PTHR22749:SF6">
    <property type="entry name" value="RIBOFLAVIN KINASE"/>
    <property type="match status" value="1"/>
</dbReference>
<dbReference type="PANTHER" id="PTHR22749">
    <property type="entry name" value="RIBOFLAVIN KINASE/FMN ADENYLYLTRANSFERASE"/>
    <property type="match status" value="1"/>
</dbReference>
<dbReference type="Pfam" id="PF01687">
    <property type="entry name" value="Flavokinase"/>
    <property type="match status" value="1"/>
</dbReference>
<dbReference type="SMART" id="SM00904">
    <property type="entry name" value="Flavokinase"/>
    <property type="match status" value="1"/>
</dbReference>
<dbReference type="SUPFAM" id="SSF82114">
    <property type="entry name" value="Riboflavin kinase-like"/>
    <property type="match status" value="1"/>
</dbReference>
<accession>Q75DY2</accession>
<evidence type="ECO:0000250" key="1"/>
<evidence type="ECO:0000250" key="2">
    <source>
        <dbReference type="UniProtKB" id="Q969G6"/>
    </source>
</evidence>
<evidence type="ECO:0000305" key="3"/>
<feature type="chain" id="PRO_0000301832" description="Riboflavin kinase">
    <location>
        <begin position="1"/>
        <end position="186"/>
    </location>
</feature>
<feature type="active site" description="Nucleophile" evidence="1">
    <location>
        <position position="123"/>
    </location>
</feature>
<feature type="binding site" evidence="2">
    <location>
        <position position="42"/>
    </location>
    <ligand>
        <name>Mg(2+)</name>
        <dbReference type="ChEBI" id="CHEBI:18420"/>
    </ligand>
</feature>
<feature type="binding site" evidence="2">
    <location>
        <position position="44"/>
    </location>
    <ligand>
        <name>Mg(2+)</name>
        <dbReference type="ChEBI" id="CHEBI:18420"/>
    </ligand>
</feature>
<sequence length="186" mass="20984">MARRPVDIPIPASPVQPFPILTEYVDIVAGFGRGSAELGIPTANVPIEQLPSEVNEMATGVYFGWARLRPNMDQEAQVHHRNDGSEVIYNFGSKLSETERGVFPIVLSVGWNPFYNNSKKTVELHILNDFEEDFYGAKIKFSFLGYIRPELNYTTKEALIEDIHTDIKIASEVLHTEPYSSLKNQL</sequence>
<keyword id="KW-0067">ATP-binding</keyword>
<keyword id="KW-0285">Flavoprotein</keyword>
<keyword id="KW-0288">FMN</keyword>
<keyword id="KW-0418">Kinase</keyword>
<keyword id="KW-0460">Magnesium</keyword>
<keyword id="KW-0479">Metal-binding</keyword>
<keyword id="KW-0547">Nucleotide-binding</keyword>
<keyword id="KW-1185">Reference proteome</keyword>
<keyword id="KW-0808">Transferase</keyword>
<keyword id="KW-0862">Zinc</keyword>